<name>MTNN_BACAN</name>
<dbReference type="EC" id="3.2.2.9" evidence="1"/>
<dbReference type="EMBL" id="AE016879">
    <property type="protein sequence ID" value="AAP28307.1"/>
    <property type="molecule type" value="Genomic_DNA"/>
</dbReference>
<dbReference type="EMBL" id="AE017334">
    <property type="protein sequence ID" value="AAT33723.2"/>
    <property type="molecule type" value="Genomic_DNA"/>
</dbReference>
<dbReference type="EMBL" id="AE017225">
    <property type="protein sequence ID" value="AAT56569.1"/>
    <property type="molecule type" value="Genomic_DNA"/>
</dbReference>
<dbReference type="RefSeq" id="NP_846821.1">
    <property type="nucleotide sequence ID" value="NC_003997.3"/>
</dbReference>
<dbReference type="RefSeq" id="WP_001217039.1">
    <property type="nucleotide sequence ID" value="NZ_WXXJ01000027.1"/>
</dbReference>
<dbReference type="RefSeq" id="YP_030518.1">
    <property type="nucleotide sequence ID" value="NC_005945.1"/>
</dbReference>
<dbReference type="PDB" id="4QEZ">
    <property type="method" value="X-ray"/>
    <property type="resolution" value="2.70 A"/>
    <property type="chains" value="A/B/C=1-231"/>
</dbReference>
<dbReference type="PDBsum" id="4QEZ"/>
<dbReference type="SMR" id="Q81LL4"/>
<dbReference type="STRING" id="261594.GBAA_4602"/>
<dbReference type="DNASU" id="1088631"/>
<dbReference type="GeneID" id="75087509"/>
<dbReference type="KEGG" id="ban:BA_4602"/>
<dbReference type="KEGG" id="bar:GBAA_4602"/>
<dbReference type="KEGG" id="bat:BAS4270"/>
<dbReference type="PATRIC" id="fig|198094.11.peg.4569"/>
<dbReference type="eggNOG" id="COG0775">
    <property type="taxonomic scope" value="Bacteria"/>
</dbReference>
<dbReference type="HOGENOM" id="CLU_031248_2_2_9"/>
<dbReference type="OMA" id="DQFVHSK"/>
<dbReference type="OrthoDB" id="9792278at2"/>
<dbReference type="UniPathway" id="UPA00904">
    <property type="reaction ID" value="UER00871"/>
</dbReference>
<dbReference type="Proteomes" id="UP000000427">
    <property type="component" value="Chromosome"/>
</dbReference>
<dbReference type="Proteomes" id="UP000000594">
    <property type="component" value="Chromosome"/>
</dbReference>
<dbReference type="GO" id="GO:0005829">
    <property type="term" value="C:cytosol"/>
    <property type="evidence" value="ECO:0007669"/>
    <property type="project" value="TreeGrafter"/>
</dbReference>
<dbReference type="GO" id="GO:0008782">
    <property type="term" value="F:adenosylhomocysteine nucleosidase activity"/>
    <property type="evidence" value="ECO:0007669"/>
    <property type="project" value="UniProtKB-UniRule"/>
</dbReference>
<dbReference type="GO" id="GO:0008930">
    <property type="term" value="F:methylthioadenosine nucleosidase activity"/>
    <property type="evidence" value="ECO:0007669"/>
    <property type="project" value="UniProtKB-UniRule"/>
</dbReference>
<dbReference type="GO" id="GO:0019509">
    <property type="term" value="P:L-methionine salvage from methylthioadenosine"/>
    <property type="evidence" value="ECO:0007669"/>
    <property type="project" value="UniProtKB-UniRule"/>
</dbReference>
<dbReference type="GO" id="GO:0019284">
    <property type="term" value="P:L-methionine salvage from S-adenosylmethionine"/>
    <property type="evidence" value="ECO:0007669"/>
    <property type="project" value="TreeGrafter"/>
</dbReference>
<dbReference type="GO" id="GO:0009164">
    <property type="term" value="P:nucleoside catabolic process"/>
    <property type="evidence" value="ECO:0007669"/>
    <property type="project" value="InterPro"/>
</dbReference>
<dbReference type="CDD" id="cd09008">
    <property type="entry name" value="MTAN"/>
    <property type="match status" value="1"/>
</dbReference>
<dbReference type="FunFam" id="3.40.50.1580:FF:000001">
    <property type="entry name" value="MTA/SAH nucleosidase family protein"/>
    <property type="match status" value="1"/>
</dbReference>
<dbReference type="Gene3D" id="3.40.50.1580">
    <property type="entry name" value="Nucleoside phosphorylase domain"/>
    <property type="match status" value="1"/>
</dbReference>
<dbReference type="HAMAP" id="MF_01684">
    <property type="entry name" value="Salvage_MtnN"/>
    <property type="match status" value="1"/>
</dbReference>
<dbReference type="InterPro" id="IPR010049">
    <property type="entry name" value="MTA_SAH_Nsdase"/>
</dbReference>
<dbReference type="InterPro" id="IPR000845">
    <property type="entry name" value="Nucleoside_phosphorylase_d"/>
</dbReference>
<dbReference type="InterPro" id="IPR035994">
    <property type="entry name" value="Nucleoside_phosphorylase_sf"/>
</dbReference>
<dbReference type="NCBIfam" id="TIGR01704">
    <property type="entry name" value="MTA_SAH-Nsdase"/>
    <property type="match status" value="1"/>
</dbReference>
<dbReference type="NCBIfam" id="NF004079">
    <property type="entry name" value="PRK05584.1"/>
    <property type="match status" value="1"/>
</dbReference>
<dbReference type="PANTHER" id="PTHR46832">
    <property type="entry name" value="5'-METHYLTHIOADENOSINE/S-ADENOSYLHOMOCYSTEINE NUCLEOSIDASE"/>
    <property type="match status" value="1"/>
</dbReference>
<dbReference type="PANTHER" id="PTHR46832:SF1">
    <property type="entry name" value="5'-METHYLTHIOADENOSINE_S-ADENOSYLHOMOCYSTEINE NUCLEOSIDASE"/>
    <property type="match status" value="1"/>
</dbReference>
<dbReference type="Pfam" id="PF01048">
    <property type="entry name" value="PNP_UDP_1"/>
    <property type="match status" value="1"/>
</dbReference>
<dbReference type="SUPFAM" id="SSF53167">
    <property type="entry name" value="Purine and uridine phosphorylases"/>
    <property type="match status" value="1"/>
</dbReference>
<comment type="function">
    <text evidence="1">Catalyzes the irreversible cleavage of the glycosidic bond in both 5'-methylthioadenosine (MTA) and S-adenosylhomocysteine (SAH/AdoHcy) to adenine and the corresponding thioribose, 5'-methylthioribose and S-ribosylhomocysteine, respectively. Also cleaves 5'-deoxyadenosine, a toxic by-product of radical S-adenosylmethionine (SAM) enzymes, into 5-deoxyribose and adenine.</text>
</comment>
<comment type="catalytic activity">
    <reaction evidence="1">
        <text>S-adenosyl-L-homocysteine + H2O = S-(5-deoxy-D-ribos-5-yl)-L-homocysteine + adenine</text>
        <dbReference type="Rhea" id="RHEA:17805"/>
        <dbReference type="ChEBI" id="CHEBI:15377"/>
        <dbReference type="ChEBI" id="CHEBI:16708"/>
        <dbReference type="ChEBI" id="CHEBI:57856"/>
        <dbReference type="ChEBI" id="CHEBI:58195"/>
        <dbReference type="EC" id="3.2.2.9"/>
    </reaction>
</comment>
<comment type="catalytic activity">
    <reaction evidence="1">
        <text>S-methyl-5'-thioadenosine + H2O = 5-(methylsulfanyl)-D-ribose + adenine</text>
        <dbReference type="Rhea" id="RHEA:13617"/>
        <dbReference type="ChEBI" id="CHEBI:15377"/>
        <dbReference type="ChEBI" id="CHEBI:16708"/>
        <dbReference type="ChEBI" id="CHEBI:17509"/>
        <dbReference type="ChEBI" id="CHEBI:78440"/>
        <dbReference type="EC" id="3.2.2.9"/>
    </reaction>
</comment>
<comment type="catalytic activity">
    <reaction evidence="1">
        <text>5'-deoxyadenosine + H2O = 5-deoxy-D-ribose + adenine</text>
        <dbReference type="Rhea" id="RHEA:29859"/>
        <dbReference type="ChEBI" id="CHEBI:15377"/>
        <dbReference type="ChEBI" id="CHEBI:16708"/>
        <dbReference type="ChEBI" id="CHEBI:17319"/>
        <dbReference type="ChEBI" id="CHEBI:149540"/>
        <dbReference type="EC" id="3.2.2.9"/>
    </reaction>
    <physiologicalReaction direction="left-to-right" evidence="1">
        <dbReference type="Rhea" id="RHEA:29860"/>
    </physiologicalReaction>
</comment>
<comment type="pathway">
    <text evidence="1">Amino-acid biosynthesis; L-methionine biosynthesis via salvage pathway; S-methyl-5-thio-alpha-D-ribose 1-phosphate from S-methyl-5'-thioadenosine (hydrolase route): step 1/2.</text>
</comment>
<comment type="similarity">
    <text evidence="1">Belongs to the PNP/UDP phosphorylase family. MtnN subfamily.</text>
</comment>
<organism>
    <name type="scientific">Bacillus anthracis</name>
    <dbReference type="NCBI Taxonomy" id="1392"/>
    <lineage>
        <taxon>Bacteria</taxon>
        <taxon>Bacillati</taxon>
        <taxon>Bacillota</taxon>
        <taxon>Bacilli</taxon>
        <taxon>Bacillales</taxon>
        <taxon>Bacillaceae</taxon>
        <taxon>Bacillus</taxon>
        <taxon>Bacillus cereus group</taxon>
    </lineage>
</organism>
<sequence>MRIAVIGAMEEEVRILRDKLEQAETETVAGCEFTKGQLAGHEVILLKSGIGKVNAAMSTTILLERYKPEKVINTGSAGGFHHSLNVGDVVISTEVRHHDVDVTAFNYEYGQVPGMPPGFKADEALVALAEKCMQAEENIQVVKGMIATGDSFMSDPNRVAAIRDKFENLYAVEMEAAAVAQVCHQYEVPFVIIRALSDIAGKESNVSFDQFLDQAALHSTNFIVKVLEELK</sequence>
<proteinExistence type="evidence at protein level"/>
<gene>
    <name evidence="1" type="primary">mtnN</name>
    <name type="ordered locus">BA_4602</name>
    <name type="ordered locus">GBAA_4602</name>
    <name type="ordered locus">BAS4270</name>
</gene>
<accession>Q81LL4</accession>
<accession>Q6HT20</accession>
<accession>Q6KMA9</accession>
<feature type="chain" id="PRO_0000359272" description="5'-methylthioadenosine/S-adenosylhomocysteine nucleosidase">
    <location>
        <begin position="1"/>
        <end position="231"/>
    </location>
</feature>
<feature type="active site" description="Proton acceptor" evidence="1">
    <location>
        <position position="12"/>
    </location>
</feature>
<feature type="active site" description="Proton donor" evidence="1">
    <location>
        <position position="198"/>
    </location>
</feature>
<feature type="binding site" evidence="1">
    <location>
        <position position="78"/>
    </location>
    <ligand>
        <name>substrate</name>
    </ligand>
</feature>
<feature type="binding site" evidence="1">
    <location>
        <position position="153"/>
    </location>
    <ligand>
        <name>substrate</name>
    </ligand>
</feature>
<feature type="binding site" evidence="1">
    <location>
        <begin position="174"/>
        <end position="175"/>
    </location>
    <ligand>
        <name>substrate</name>
    </ligand>
</feature>
<feature type="strand" evidence="2">
    <location>
        <begin position="3"/>
        <end position="9"/>
    </location>
</feature>
<feature type="helix" evidence="2">
    <location>
        <begin position="10"/>
        <end position="19"/>
    </location>
</feature>
<feature type="strand" evidence="2">
    <location>
        <begin position="21"/>
        <end position="28"/>
    </location>
</feature>
<feature type="strand" evidence="2">
    <location>
        <begin position="31"/>
        <end position="38"/>
    </location>
</feature>
<feature type="strand" evidence="2">
    <location>
        <begin position="41"/>
        <end position="47"/>
    </location>
</feature>
<feature type="helix" evidence="2">
    <location>
        <begin position="52"/>
        <end position="65"/>
    </location>
</feature>
<feature type="strand" evidence="2">
    <location>
        <begin position="69"/>
        <end position="73"/>
    </location>
</feature>
<feature type="strand" evidence="2">
    <location>
        <begin position="75"/>
        <end position="79"/>
    </location>
</feature>
<feature type="strand" evidence="2">
    <location>
        <begin position="89"/>
        <end position="99"/>
    </location>
</feature>
<feature type="helix" evidence="2">
    <location>
        <begin position="103"/>
        <end position="105"/>
    </location>
</feature>
<feature type="strand" evidence="2">
    <location>
        <begin position="117"/>
        <end position="120"/>
    </location>
</feature>
<feature type="helix" evidence="2">
    <location>
        <begin position="123"/>
        <end position="132"/>
    </location>
</feature>
<feature type="strand" evidence="2">
    <location>
        <begin position="141"/>
        <end position="148"/>
    </location>
</feature>
<feature type="helix" evidence="2">
    <location>
        <begin position="156"/>
        <end position="163"/>
    </location>
</feature>
<feature type="strand" evidence="2">
    <location>
        <begin position="166"/>
        <end position="175"/>
    </location>
</feature>
<feature type="helix" evidence="2">
    <location>
        <begin position="176"/>
        <end position="186"/>
    </location>
</feature>
<feature type="strand" evidence="2">
    <location>
        <begin position="190"/>
        <end position="199"/>
    </location>
</feature>
<feature type="helix" evidence="2">
    <location>
        <begin position="204"/>
        <end position="228"/>
    </location>
</feature>
<evidence type="ECO:0000255" key="1">
    <source>
        <dbReference type="HAMAP-Rule" id="MF_01684"/>
    </source>
</evidence>
<evidence type="ECO:0007829" key="2">
    <source>
        <dbReference type="PDB" id="4QEZ"/>
    </source>
</evidence>
<protein>
    <recommendedName>
        <fullName evidence="1">5'-methylthioadenosine/S-adenosylhomocysteine nucleosidase</fullName>
        <shortName evidence="1">MTA/SAH nucleosidase</shortName>
        <shortName evidence="1">MTAN</shortName>
        <ecNumber evidence="1">3.2.2.9</ecNumber>
    </recommendedName>
    <alternativeName>
        <fullName evidence="1">5'-deoxyadenosine nucleosidase</fullName>
        <shortName evidence="1">DOA nucleosidase</shortName>
        <shortName evidence="1">dAdo nucleosidase</shortName>
    </alternativeName>
    <alternativeName>
        <fullName evidence="1">5'-methylthioadenosine nucleosidase</fullName>
        <shortName evidence="1">MTA nucleosidase</shortName>
    </alternativeName>
    <alternativeName>
        <fullName evidence="1">S-adenosylhomocysteine nucleosidase</fullName>
        <shortName evidence="1">AdoHcy nucleosidase</shortName>
        <shortName evidence="1">SAH nucleosidase</shortName>
        <shortName evidence="1">SRH nucleosidase</shortName>
    </alternativeName>
</protein>
<keyword id="KW-0002">3D-structure</keyword>
<keyword id="KW-0028">Amino-acid biosynthesis</keyword>
<keyword id="KW-0378">Hydrolase</keyword>
<keyword id="KW-0486">Methionine biosynthesis</keyword>
<keyword id="KW-1185">Reference proteome</keyword>
<reference key="1">
    <citation type="journal article" date="2003" name="Nature">
        <title>The genome sequence of Bacillus anthracis Ames and comparison to closely related bacteria.</title>
        <authorList>
            <person name="Read T.D."/>
            <person name="Peterson S.N."/>
            <person name="Tourasse N.J."/>
            <person name="Baillie L.W."/>
            <person name="Paulsen I.T."/>
            <person name="Nelson K.E."/>
            <person name="Tettelin H."/>
            <person name="Fouts D.E."/>
            <person name="Eisen J.A."/>
            <person name="Gill S.R."/>
            <person name="Holtzapple E.K."/>
            <person name="Okstad O.A."/>
            <person name="Helgason E."/>
            <person name="Rilstone J."/>
            <person name="Wu M."/>
            <person name="Kolonay J.F."/>
            <person name="Beanan M.J."/>
            <person name="Dodson R.J."/>
            <person name="Brinkac L.M."/>
            <person name="Gwinn M.L."/>
            <person name="DeBoy R.T."/>
            <person name="Madpu R."/>
            <person name="Daugherty S.C."/>
            <person name="Durkin A.S."/>
            <person name="Haft D.H."/>
            <person name="Nelson W.C."/>
            <person name="Peterson J.D."/>
            <person name="Pop M."/>
            <person name="Khouri H.M."/>
            <person name="Radune D."/>
            <person name="Benton J.L."/>
            <person name="Mahamoud Y."/>
            <person name="Jiang L."/>
            <person name="Hance I.R."/>
            <person name="Weidman J.F."/>
            <person name="Berry K.J."/>
            <person name="Plaut R.D."/>
            <person name="Wolf A.M."/>
            <person name="Watkins K.L."/>
            <person name="Nierman W.C."/>
            <person name="Hazen A."/>
            <person name="Cline R.T."/>
            <person name="Redmond C."/>
            <person name="Thwaite J.E."/>
            <person name="White O."/>
            <person name="Salzberg S.L."/>
            <person name="Thomason B."/>
            <person name="Friedlander A.M."/>
            <person name="Koehler T.M."/>
            <person name="Hanna P.C."/>
            <person name="Kolstoe A.-B."/>
            <person name="Fraser C.M."/>
        </authorList>
    </citation>
    <scope>NUCLEOTIDE SEQUENCE [LARGE SCALE GENOMIC DNA]</scope>
    <source>
        <strain>Ames / isolate Porton</strain>
    </source>
</reference>
<reference key="2">
    <citation type="submission" date="2004-01" db="EMBL/GenBank/DDBJ databases">
        <title>Complete genome sequence of Bacillus anthracis Sterne.</title>
        <authorList>
            <person name="Brettin T.S."/>
            <person name="Bruce D."/>
            <person name="Challacombe J.F."/>
            <person name="Gilna P."/>
            <person name="Han C."/>
            <person name="Hill K."/>
            <person name="Hitchcock P."/>
            <person name="Jackson P."/>
            <person name="Keim P."/>
            <person name="Longmire J."/>
            <person name="Lucas S."/>
            <person name="Okinaka R."/>
            <person name="Richardson P."/>
            <person name="Rubin E."/>
            <person name="Tice H."/>
        </authorList>
    </citation>
    <scope>NUCLEOTIDE SEQUENCE [LARGE SCALE GENOMIC DNA]</scope>
    <source>
        <strain>Sterne</strain>
    </source>
</reference>
<reference key="3">
    <citation type="journal article" date="2009" name="J. Bacteriol.">
        <title>The complete genome sequence of Bacillus anthracis Ames 'Ancestor'.</title>
        <authorList>
            <person name="Ravel J."/>
            <person name="Jiang L."/>
            <person name="Stanley S.T."/>
            <person name="Wilson M.R."/>
            <person name="Decker R.S."/>
            <person name="Read T.D."/>
            <person name="Worsham P."/>
            <person name="Keim P.S."/>
            <person name="Salzberg S.L."/>
            <person name="Fraser-Liggett C.M."/>
            <person name="Rasko D.A."/>
        </authorList>
    </citation>
    <scope>NUCLEOTIDE SEQUENCE [LARGE SCALE GENOMIC DNA]</scope>
    <source>
        <strain>Ames ancestor</strain>
    </source>
</reference>